<proteinExistence type="inferred from homology"/>
<name>HSLU_SHIFL</name>
<sequence>MSEMTPREIVSELDKHIIGQDNAKRSVAIALRNRWRRMQLNEELRHEVTPKNILMIGPTGVGKTEIARRLAKLANAPFIKVEATKFTEVGYVGKEVDSIIRDLTDAAVKMVRVQAIEKNRYRAEELAEERILDVLIPPAKNNWGQTEQQQEPSAARQAFRKKLREGQLDDKEIEIDLAAAPMGVEIMAPPGMEEMTSQLQSMFQNLGGQKQKARKLKIKDAMKLLIEEEAAKLVNPEELKQDAIDAVEQHGIVFIDEIDKICKRGESSGPDVSREGVQRDLLPLVEGCTVSTKHGMVKTDHILFIASGAFQIAKPSDLIPELQGRLPIRVELQALTTSDFERILTEPNASITVQYKALMATEGVNIEFTDSGIKRIAEAAWQVNESTENIGARRLHTVLERLMEEISYDASDLSGQNITIDADYVSKHLDALVADEDLSRFIL</sequence>
<evidence type="ECO:0000255" key="1">
    <source>
        <dbReference type="HAMAP-Rule" id="MF_00249"/>
    </source>
</evidence>
<dbReference type="EMBL" id="AE005674">
    <property type="protein sequence ID" value="AAN45442.1"/>
    <property type="molecule type" value="Genomic_DNA"/>
</dbReference>
<dbReference type="EMBL" id="AE014073">
    <property type="protein sequence ID" value="AAP18758.1"/>
    <property type="molecule type" value="Genomic_DNA"/>
</dbReference>
<dbReference type="RefSeq" id="NP_709735.1">
    <property type="nucleotide sequence ID" value="NC_004337.2"/>
</dbReference>
<dbReference type="RefSeq" id="WP_001293341.1">
    <property type="nucleotide sequence ID" value="NZ_WPGW01000012.1"/>
</dbReference>
<dbReference type="SMR" id="P0A6H7"/>
<dbReference type="STRING" id="198214.SF4009"/>
<dbReference type="DrugBank" id="DB04395">
    <property type="generic name" value="Phosphoaminophosphonic Acid-Adenylate Ester"/>
</dbReference>
<dbReference type="PaxDb" id="198214-SF4009"/>
<dbReference type="GeneID" id="1025162"/>
<dbReference type="GeneID" id="93777967"/>
<dbReference type="KEGG" id="sfl:SF4009"/>
<dbReference type="KEGG" id="sfx:S3738"/>
<dbReference type="PATRIC" id="fig|198214.7.peg.4724"/>
<dbReference type="HOGENOM" id="CLU_033123_0_0_6"/>
<dbReference type="Proteomes" id="UP000001006">
    <property type="component" value="Chromosome"/>
</dbReference>
<dbReference type="Proteomes" id="UP000002673">
    <property type="component" value="Chromosome"/>
</dbReference>
<dbReference type="GO" id="GO:0009376">
    <property type="term" value="C:HslUV protease complex"/>
    <property type="evidence" value="ECO:0007669"/>
    <property type="project" value="UniProtKB-UniRule"/>
</dbReference>
<dbReference type="GO" id="GO:0005524">
    <property type="term" value="F:ATP binding"/>
    <property type="evidence" value="ECO:0007669"/>
    <property type="project" value="UniProtKB-UniRule"/>
</dbReference>
<dbReference type="GO" id="GO:0016887">
    <property type="term" value="F:ATP hydrolysis activity"/>
    <property type="evidence" value="ECO:0007669"/>
    <property type="project" value="InterPro"/>
</dbReference>
<dbReference type="GO" id="GO:0008233">
    <property type="term" value="F:peptidase activity"/>
    <property type="evidence" value="ECO:0007669"/>
    <property type="project" value="InterPro"/>
</dbReference>
<dbReference type="GO" id="GO:0036402">
    <property type="term" value="F:proteasome-activating activity"/>
    <property type="evidence" value="ECO:0007669"/>
    <property type="project" value="UniProtKB-UniRule"/>
</dbReference>
<dbReference type="GO" id="GO:0043335">
    <property type="term" value="P:protein unfolding"/>
    <property type="evidence" value="ECO:0007669"/>
    <property type="project" value="UniProtKB-UniRule"/>
</dbReference>
<dbReference type="GO" id="GO:0051603">
    <property type="term" value="P:proteolysis involved in protein catabolic process"/>
    <property type="evidence" value="ECO:0007669"/>
    <property type="project" value="TreeGrafter"/>
</dbReference>
<dbReference type="CDD" id="cd19498">
    <property type="entry name" value="RecA-like_HslU"/>
    <property type="match status" value="1"/>
</dbReference>
<dbReference type="FunFam" id="1.10.8.10:FF:000012">
    <property type="entry name" value="ATP-dependent protease ATPase subunit HslU"/>
    <property type="match status" value="1"/>
</dbReference>
<dbReference type="FunFam" id="1.10.8.10:FF:000028">
    <property type="entry name" value="ATP-dependent protease ATPase subunit HslU"/>
    <property type="match status" value="1"/>
</dbReference>
<dbReference type="FunFam" id="1.10.8.60:FF:000027">
    <property type="entry name" value="ATP-dependent protease ATPase subunit HslU"/>
    <property type="match status" value="1"/>
</dbReference>
<dbReference type="FunFam" id="3.40.50.300:FF:000213">
    <property type="entry name" value="ATP-dependent protease ATPase subunit HslU"/>
    <property type="match status" value="1"/>
</dbReference>
<dbReference type="FunFam" id="3.40.50.300:FF:000220">
    <property type="entry name" value="ATP-dependent protease ATPase subunit HslU"/>
    <property type="match status" value="1"/>
</dbReference>
<dbReference type="Gene3D" id="1.10.8.60">
    <property type="match status" value="1"/>
</dbReference>
<dbReference type="Gene3D" id="1.10.8.10">
    <property type="entry name" value="DNA helicase RuvA subunit, C-terminal domain"/>
    <property type="match status" value="2"/>
</dbReference>
<dbReference type="Gene3D" id="3.40.50.300">
    <property type="entry name" value="P-loop containing nucleotide triphosphate hydrolases"/>
    <property type="match status" value="1"/>
</dbReference>
<dbReference type="HAMAP" id="MF_00249">
    <property type="entry name" value="HslU"/>
    <property type="match status" value="1"/>
</dbReference>
<dbReference type="InterPro" id="IPR003593">
    <property type="entry name" value="AAA+_ATPase"/>
</dbReference>
<dbReference type="InterPro" id="IPR050052">
    <property type="entry name" value="ATP-dep_Clp_protease_ClpX"/>
</dbReference>
<dbReference type="InterPro" id="IPR003959">
    <property type="entry name" value="ATPase_AAA_core"/>
</dbReference>
<dbReference type="InterPro" id="IPR019489">
    <property type="entry name" value="Clp_ATPase_C"/>
</dbReference>
<dbReference type="InterPro" id="IPR004491">
    <property type="entry name" value="HslU"/>
</dbReference>
<dbReference type="InterPro" id="IPR027417">
    <property type="entry name" value="P-loop_NTPase"/>
</dbReference>
<dbReference type="NCBIfam" id="TIGR00390">
    <property type="entry name" value="hslU"/>
    <property type="match status" value="1"/>
</dbReference>
<dbReference type="NCBIfam" id="NF003544">
    <property type="entry name" value="PRK05201.1"/>
    <property type="match status" value="1"/>
</dbReference>
<dbReference type="PANTHER" id="PTHR48102">
    <property type="entry name" value="ATP-DEPENDENT CLP PROTEASE ATP-BINDING SUBUNIT CLPX-LIKE, MITOCHONDRIAL-RELATED"/>
    <property type="match status" value="1"/>
</dbReference>
<dbReference type="PANTHER" id="PTHR48102:SF3">
    <property type="entry name" value="ATP-DEPENDENT PROTEASE ATPASE SUBUNIT HSLU"/>
    <property type="match status" value="1"/>
</dbReference>
<dbReference type="Pfam" id="PF00004">
    <property type="entry name" value="AAA"/>
    <property type="match status" value="1"/>
</dbReference>
<dbReference type="Pfam" id="PF07724">
    <property type="entry name" value="AAA_2"/>
    <property type="match status" value="1"/>
</dbReference>
<dbReference type="SMART" id="SM00382">
    <property type="entry name" value="AAA"/>
    <property type="match status" value="1"/>
</dbReference>
<dbReference type="SMART" id="SM01086">
    <property type="entry name" value="ClpB_D2-small"/>
    <property type="match status" value="1"/>
</dbReference>
<dbReference type="SUPFAM" id="SSF52540">
    <property type="entry name" value="P-loop containing nucleoside triphosphate hydrolases"/>
    <property type="match status" value="1"/>
</dbReference>
<organism>
    <name type="scientific">Shigella flexneri</name>
    <dbReference type="NCBI Taxonomy" id="623"/>
    <lineage>
        <taxon>Bacteria</taxon>
        <taxon>Pseudomonadati</taxon>
        <taxon>Pseudomonadota</taxon>
        <taxon>Gammaproteobacteria</taxon>
        <taxon>Enterobacterales</taxon>
        <taxon>Enterobacteriaceae</taxon>
        <taxon>Shigella</taxon>
    </lineage>
</organism>
<gene>
    <name evidence="1" type="primary">hslU</name>
    <name type="synonym">htpI</name>
    <name type="ordered locus">SF4009</name>
    <name type="ordered locus">S3738</name>
</gene>
<keyword id="KW-0067">ATP-binding</keyword>
<keyword id="KW-0143">Chaperone</keyword>
<keyword id="KW-0963">Cytoplasm</keyword>
<keyword id="KW-0547">Nucleotide-binding</keyword>
<keyword id="KW-1185">Reference proteome</keyword>
<keyword id="KW-0346">Stress response</keyword>
<reference key="1">
    <citation type="journal article" date="2002" name="Nucleic Acids Res.">
        <title>Genome sequence of Shigella flexneri 2a: insights into pathogenicity through comparison with genomes of Escherichia coli K12 and O157.</title>
        <authorList>
            <person name="Jin Q."/>
            <person name="Yuan Z."/>
            <person name="Xu J."/>
            <person name="Wang Y."/>
            <person name="Shen Y."/>
            <person name="Lu W."/>
            <person name="Wang J."/>
            <person name="Liu H."/>
            <person name="Yang J."/>
            <person name="Yang F."/>
            <person name="Zhang X."/>
            <person name="Zhang J."/>
            <person name="Yang G."/>
            <person name="Wu H."/>
            <person name="Qu D."/>
            <person name="Dong J."/>
            <person name="Sun L."/>
            <person name="Xue Y."/>
            <person name="Zhao A."/>
            <person name="Gao Y."/>
            <person name="Zhu J."/>
            <person name="Kan B."/>
            <person name="Ding K."/>
            <person name="Chen S."/>
            <person name="Cheng H."/>
            <person name="Yao Z."/>
            <person name="He B."/>
            <person name="Chen R."/>
            <person name="Ma D."/>
            <person name="Qiang B."/>
            <person name="Wen Y."/>
            <person name="Hou Y."/>
            <person name="Yu J."/>
        </authorList>
    </citation>
    <scope>NUCLEOTIDE SEQUENCE [LARGE SCALE GENOMIC DNA]</scope>
    <source>
        <strain>301 / Serotype 2a</strain>
    </source>
</reference>
<reference key="2">
    <citation type="journal article" date="2003" name="Infect. Immun.">
        <title>Complete genome sequence and comparative genomics of Shigella flexneri serotype 2a strain 2457T.</title>
        <authorList>
            <person name="Wei J."/>
            <person name="Goldberg M.B."/>
            <person name="Burland V."/>
            <person name="Venkatesan M.M."/>
            <person name="Deng W."/>
            <person name="Fournier G."/>
            <person name="Mayhew G.F."/>
            <person name="Plunkett G. III"/>
            <person name="Rose D.J."/>
            <person name="Darling A."/>
            <person name="Mau B."/>
            <person name="Perna N.T."/>
            <person name="Payne S.M."/>
            <person name="Runyen-Janecky L.J."/>
            <person name="Zhou S."/>
            <person name="Schwartz D.C."/>
            <person name="Blattner F.R."/>
        </authorList>
    </citation>
    <scope>NUCLEOTIDE SEQUENCE [LARGE SCALE GENOMIC DNA]</scope>
    <source>
        <strain>ATCC 700930 / 2457T / Serotype 2a</strain>
    </source>
</reference>
<feature type="chain" id="PRO_0000160545" description="ATP-dependent protease ATPase subunit HslU">
    <location>
        <begin position="1"/>
        <end position="443"/>
    </location>
</feature>
<feature type="binding site" evidence="1">
    <location>
        <position position="18"/>
    </location>
    <ligand>
        <name>ATP</name>
        <dbReference type="ChEBI" id="CHEBI:30616"/>
    </ligand>
</feature>
<feature type="binding site" evidence="1">
    <location>
        <begin position="60"/>
        <end position="65"/>
    </location>
    <ligand>
        <name>ATP</name>
        <dbReference type="ChEBI" id="CHEBI:30616"/>
    </ligand>
</feature>
<feature type="binding site" evidence="1">
    <location>
        <position position="256"/>
    </location>
    <ligand>
        <name>ATP</name>
        <dbReference type="ChEBI" id="CHEBI:30616"/>
    </ligand>
</feature>
<feature type="binding site" evidence="1">
    <location>
        <position position="321"/>
    </location>
    <ligand>
        <name>ATP</name>
        <dbReference type="ChEBI" id="CHEBI:30616"/>
    </ligand>
</feature>
<feature type="binding site" evidence="1">
    <location>
        <position position="393"/>
    </location>
    <ligand>
        <name>ATP</name>
        <dbReference type="ChEBI" id="CHEBI:30616"/>
    </ligand>
</feature>
<protein>
    <recommendedName>
        <fullName evidence="1">ATP-dependent protease ATPase subunit HslU</fullName>
    </recommendedName>
    <alternativeName>
        <fullName evidence="1">Heat shock protein HslU</fullName>
    </alternativeName>
    <alternativeName>
        <fullName evidence="1">Unfoldase HslU</fullName>
    </alternativeName>
</protein>
<accession>P0A6H7</accession>
<accession>P32168</accession>
<comment type="function">
    <text evidence="1">ATPase subunit of a proteasome-like degradation complex; this subunit has chaperone activity. The binding of ATP and its subsequent hydrolysis by HslU are essential for unfolding of protein substrates subsequently hydrolyzed by HslV. HslU recognizes the N-terminal part of its protein substrates and unfolds these before they are guided to HslV for hydrolysis.</text>
</comment>
<comment type="subunit">
    <text evidence="1">A double ring-shaped homohexamer of HslV is capped on each side by a ring-shaped HslU homohexamer. The assembly of the HslU/HslV complex is dependent on binding of ATP.</text>
</comment>
<comment type="subcellular location">
    <subcellularLocation>
        <location evidence="1">Cytoplasm</location>
    </subcellularLocation>
</comment>
<comment type="induction">
    <text evidence="1">By heat shock.</text>
</comment>
<comment type="similarity">
    <text evidence="1">Belongs to the ClpX chaperone family. HslU subfamily.</text>
</comment>